<evidence type="ECO:0000255" key="1">
    <source>
        <dbReference type="HAMAP-Rule" id="MF_01346"/>
    </source>
</evidence>
<evidence type="ECO:0000256" key="2">
    <source>
        <dbReference type="SAM" id="MobiDB-lite"/>
    </source>
</evidence>
<keyword id="KW-0066">ATP synthesis</keyword>
<keyword id="KW-0067">ATP-binding</keyword>
<keyword id="KW-0997">Cell inner membrane</keyword>
<keyword id="KW-1003">Cell membrane</keyword>
<keyword id="KW-0139">CF(1)</keyword>
<keyword id="KW-0375">Hydrogen ion transport</keyword>
<keyword id="KW-0406">Ion transport</keyword>
<keyword id="KW-0472">Membrane</keyword>
<keyword id="KW-0547">Nucleotide-binding</keyword>
<keyword id="KW-1278">Translocase</keyword>
<keyword id="KW-0813">Transport</keyword>
<reference key="1">
    <citation type="journal article" date="2010" name="Genome Biol. Evol.">
        <title>Continuing evolution of Burkholderia mallei through genome reduction and large-scale rearrangements.</title>
        <authorList>
            <person name="Losada L."/>
            <person name="Ronning C.M."/>
            <person name="DeShazer D."/>
            <person name="Woods D."/>
            <person name="Fedorova N."/>
            <person name="Kim H.S."/>
            <person name="Shabalina S.A."/>
            <person name="Pearson T.R."/>
            <person name="Brinkac L."/>
            <person name="Tan P."/>
            <person name="Nandi T."/>
            <person name="Crabtree J."/>
            <person name="Badger J."/>
            <person name="Beckstrom-Sternberg S."/>
            <person name="Saqib M."/>
            <person name="Schutzer S.E."/>
            <person name="Keim P."/>
            <person name="Nierman W.C."/>
        </authorList>
    </citation>
    <scope>NUCLEOTIDE SEQUENCE [LARGE SCALE GENOMIC DNA]</scope>
    <source>
        <strain>NCTC 10247</strain>
    </source>
</reference>
<dbReference type="EC" id="7.1.2.2" evidence="1"/>
<dbReference type="EMBL" id="CP000547">
    <property type="protein sequence ID" value="ABO03273.1"/>
    <property type="molecule type" value="Genomic_DNA"/>
</dbReference>
<dbReference type="RefSeq" id="WP_004188355.1">
    <property type="nucleotide sequence ID" value="NZ_CP007801.1"/>
</dbReference>
<dbReference type="SMR" id="A3MAS4"/>
<dbReference type="KEGG" id="bmaz:BM44_3540"/>
<dbReference type="KEGG" id="bmn:BMA10247_A0154"/>
<dbReference type="PATRIC" id="fig|320389.8.peg.3991"/>
<dbReference type="GO" id="GO:0005886">
    <property type="term" value="C:plasma membrane"/>
    <property type="evidence" value="ECO:0007669"/>
    <property type="project" value="UniProtKB-SubCell"/>
</dbReference>
<dbReference type="GO" id="GO:0045259">
    <property type="term" value="C:proton-transporting ATP synthase complex"/>
    <property type="evidence" value="ECO:0007669"/>
    <property type="project" value="UniProtKB-KW"/>
</dbReference>
<dbReference type="GO" id="GO:0043531">
    <property type="term" value="F:ADP binding"/>
    <property type="evidence" value="ECO:0007669"/>
    <property type="project" value="TreeGrafter"/>
</dbReference>
<dbReference type="GO" id="GO:0005524">
    <property type="term" value="F:ATP binding"/>
    <property type="evidence" value="ECO:0007669"/>
    <property type="project" value="UniProtKB-UniRule"/>
</dbReference>
<dbReference type="GO" id="GO:0046933">
    <property type="term" value="F:proton-transporting ATP synthase activity, rotational mechanism"/>
    <property type="evidence" value="ECO:0007669"/>
    <property type="project" value="UniProtKB-UniRule"/>
</dbReference>
<dbReference type="CDD" id="cd18113">
    <property type="entry name" value="ATP-synt_F1_alpha_C"/>
    <property type="match status" value="1"/>
</dbReference>
<dbReference type="CDD" id="cd18116">
    <property type="entry name" value="ATP-synt_F1_alpha_N"/>
    <property type="match status" value="1"/>
</dbReference>
<dbReference type="CDD" id="cd01132">
    <property type="entry name" value="F1-ATPase_alpha_CD"/>
    <property type="match status" value="1"/>
</dbReference>
<dbReference type="FunFam" id="3.40.50.300:FF:004039">
    <property type="entry name" value="ATP synthase subunit alpha, mitochondrial"/>
    <property type="match status" value="1"/>
</dbReference>
<dbReference type="Gene3D" id="2.40.30.20">
    <property type="match status" value="1"/>
</dbReference>
<dbReference type="Gene3D" id="1.20.150.20">
    <property type="entry name" value="ATP synthase alpha/beta chain, C-terminal domain"/>
    <property type="match status" value="1"/>
</dbReference>
<dbReference type="Gene3D" id="3.40.50.300">
    <property type="entry name" value="P-loop containing nucleotide triphosphate hydrolases"/>
    <property type="match status" value="1"/>
</dbReference>
<dbReference type="HAMAP" id="MF_01346">
    <property type="entry name" value="ATP_synth_alpha_bact"/>
    <property type="match status" value="1"/>
</dbReference>
<dbReference type="InterPro" id="IPR023366">
    <property type="entry name" value="ATP_synth_asu-like_sf"/>
</dbReference>
<dbReference type="InterPro" id="IPR000793">
    <property type="entry name" value="ATP_synth_asu_C"/>
</dbReference>
<dbReference type="InterPro" id="IPR038376">
    <property type="entry name" value="ATP_synth_asu_C_sf"/>
</dbReference>
<dbReference type="InterPro" id="IPR033732">
    <property type="entry name" value="ATP_synth_F1_a_nt-bd_dom"/>
</dbReference>
<dbReference type="InterPro" id="IPR005294">
    <property type="entry name" value="ATP_synth_F1_asu"/>
</dbReference>
<dbReference type="InterPro" id="IPR020003">
    <property type="entry name" value="ATPase_a/bsu_AS"/>
</dbReference>
<dbReference type="InterPro" id="IPR004100">
    <property type="entry name" value="ATPase_F1/V1/A1_a/bsu_N"/>
</dbReference>
<dbReference type="InterPro" id="IPR036121">
    <property type="entry name" value="ATPase_F1/V1/A1_a/bsu_N_sf"/>
</dbReference>
<dbReference type="InterPro" id="IPR000194">
    <property type="entry name" value="ATPase_F1/V1/A1_a/bsu_nucl-bd"/>
</dbReference>
<dbReference type="InterPro" id="IPR027417">
    <property type="entry name" value="P-loop_NTPase"/>
</dbReference>
<dbReference type="NCBIfam" id="TIGR00962">
    <property type="entry name" value="atpA"/>
    <property type="match status" value="1"/>
</dbReference>
<dbReference type="NCBIfam" id="NF009884">
    <property type="entry name" value="PRK13343.1"/>
    <property type="match status" value="1"/>
</dbReference>
<dbReference type="PANTHER" id="PTHR48082">
    <property type="entry name" value="ATP SYNTHASE SUBUNIT ALPHA, MITOCHONDRIAL"/>
    <property type="match status" value="1"/>
</dbReference>
<dbReference type="PANTHER" id="PTHR48082:SF2">
    <property type="entry name" value="ATP SYNTHASE SUBUNIT ALPHA, MITOCHONDRIAL"/>
    <property type="match status" value="1"/>
</dbReference>
<dbReference type="Pfam" id="PF00006">
    <property type="entry name" value="ATP-synt_ab"/>
    <property type="match status" value="1"/>
</dbReference>
<dbReference type="Pfam" id="PF00306">
    <property type="entry name" value="ATP-synt_ab_C"/>
    <property type="match status" value="1"/>
</dbReference>
<dbReference type="Pfam" id="PF02874">
    <property type="entry name" value="ATP-synt_ab_N"/>
    <property type="match status" value="1"/>
</dbReference>
<dbReference type="SUPFAM" id="SSF47917">
    <property type="entry name" value="C-terminal domain of alpha and beta subunits of F1 ATP synthase"/>
    <property type="match status" value="1"/>
</dbReference>
<dbReference type="SUPFAM" id="SSF50615">
    <property type="entry name" value="N-terminal domain of alpha and beta subunits of F1 ATP synthase"/>
    <property type="match status" value="1"/>
</dbReference>
<dbReference type="SUPFAM" id="SSF52540">
    <property type="entry name" value="P-loop containing nucleoside triphosphate hydrolases"/>
    <property type="match status" value="1"/>
</dbReference>
<dbReference type="PROSITE" id="PS00152">
    <property type="entry name" value="ATPASE_ALPHA_BETA"/>
    <property type="match status" value="1"/>
</dbReference>
<feature type="chain" id="PRO_0000339020" description="ATP synthase subunit alpha 2">
    <location>
        <begin position="1"/>
        <end position="670"/>
    </location>
</feature>
<feature type="region of interest" description="Disordered" evidence="2">
    <location>
        <begin position="525"/>
        <end position="670"/>
    </location>
</feature>
<feature type="compositionally biased region" description="Basic and acidic residues" evidence="2">
    <location>
        <begin position="543"/>
        <end position="588"/>
    </location>
</feature>
<feature type="compositionally biased region" description="Low complexity" evidence="2">
    <location>
        <begin position="589"/>
        <end position="599"/>
    </location>
</feature>
<feature type="compositionally biased region" description="Basic and acidic residues" evidence="2">
    <location>
        <begin position="621"/>
        <end position="639"/>
    </location>
</feature>
<feature type="compositionally biased region" description="Low complexity" evidence="2">
    <location>
        <begin position="650"/>
        <end position="661"/>
    </location>
</feature>
<feature type="binding site" evidence="1">
    <location>
        <begin position="180"/>
        <end position="187"/>
    </location>
    <ligand>
        <name>ATP</name>
        <dbReference type="ChEBI" id="CHEBI:30616"/>
    </ligand>
</feature>
<feature type="site" description="Required for activity" evidence="1">
    <location>
        <position position="373"/>
    </location>
</feature>
<name>ATPA2_BURM7</name>
<comment type="function">
    <text evidence="1">Produces ATP from ADP in the presence of a proton gradient across the membrane. The alpha chain is a regulatory subunit.</text>
</comment>
<comment type="catalytic activity">
    <reaction evidence="1">
        <text>ATP + H2O + 4 H(+)(in) = ADP + phosphate + 5 H(+)(out)</text>
        <dbReference type="Rhea" id="RHEA:57720"/>
        <dbReference type="ChEBI" id="CHEBI:15377"/>
        <dbReference type="ChEBI" id="CHEBI:15378"/>
        <dbReference type="ChEBI" id="CHEBI:30616"/>
        <dbReference type="ChEBI" id="CHEBI:43474"/>
        <dbReference type="ChEBI" id="CHEBI:456216"/>
        <dbReference type="EC" id="7.1.2.2"/>
    </reaction>
</comment>
<comment type="subunit">
    <text evidence="1">F-type ATPases have 2 components, CF(1) - the catalytic core - and CF(0) - the membrane proton channel. CF(1) has five subunits: alpha(3), beta(3), gamma(1), delta(1), epsilon(1). CF(0) has three main subunits: a(1), b(2) and c(9-12). The alpha and beta chains form an alternating ring which encloses part of the gamma chain. CF(1) is attached to CF(0) by a central stalk formed by the gamma and epsilon chains, while a peripheral stalk is formed by the delta and b chains.</text>
</comment>
<comment type="subcellular location">
    <subcellularLocation>
        <location evidence="1">Cell inner membrane</location>
        <topology evidence="1">Peripheral membrane protein</topology>
    </subcellularLocation>
</comment>
<comment type="similarity">
    <text evidence="1">Belongs to the ATPase alpha/beta chains family.</text>
</comment>
<accession>A3MAS4</accession>
<gene>
    <name evidence="1" type="primary">atpA2</name>
    <name type="ordered locus">BMA10247_A0154</name>
</gene>
<protein>
    <recommendedName>
        <fullName evidence="1">ATP synthase subunit alpha 2</fullName>
        <ecNumber evidence="1">7.1.2.2</ecNumber>
    </recommendedName>
    <alternativeName>
        <fullName evidence="1">ATP synthase F1 sector subunit alpha 2</fullName>
    </alternativeName>
    <alternativeName>
        <fullName evidence="1">F-ATPase subunit alpha 2</fullName>
    </alternativeName>
</protein>
<organism>
    <name type="scientific">Burkholderia mallei (strain NCTC 10247)</name>
    <dbReference type="NCBI Taxonomy" id="320389"/>
    <lineage>
        <taxon>Bacteria</taxon>
        <taxon>Pseudomonadati</taxon>
        <taxon>Pseudomonadota</taxon>
        <taxon>Betaproteobacteria</taxon>
        <taxon>Burkholderiales</taxon>
        <taxon>Burkholderiaceae</taxon>
        <taxon>Burkholderia</taxon>
        <taxon>pseudomallei group</taxon>
    </lineage>
</organism>
<sequence length="670" mass="70296">MTPTPDAPAAADAATGAGWLARRRGALARVALAPIAQAIGRVERVADGIAFVSGLEDTMLNEVLRFEGGVTGFAHTLDEDLISVVLLDPDAGVRAQTAVARTGAVLEVPAGPQLLGRVVDPLGRPLDGGAPLDAAHTLPIERAAPAIIERDLVSEPLDTGVLIVDALFTIGRGQRELIIGDRATGKTSLAIDAIVNQRHSDVICVYVAIGQRASAVRRVIDAVRRYGAPERCVFVVAPAACAPGLQWIAPFAGFSIAEYFRDRGQHALVVVDDLTKHAATHRELALLTREPPGREAYPGDIFYVHARLLERAAKLSAALGGGSLSALPIAETDAGNLAAYIPTNLISITDGQIVLDSALFAANQRPAVDVGLSVSRVGGKAQHPALRAASGRLRLDYAQFLELEAFTRFGGLTDARLRAQITRGERIRALITQPRFRALRTLDEVVLLKALAAGTLDAMSPDLVAPLRERLPAWLDARIAALTPALAPPRDWLADDAALDALAESVGELIERIAADAARRATAGMPAEDAAGDIGGAFGGEQARGDADRDADHGANREVSREVSPEASREVSREVSREVSHEADRDAAADAARVAGRAPGRAEPDRAVPRAMPDGPPRAQADGDRASASRPPPDARGDAARTAPSPQGGADANVNADANVDAEAEARHKR</sequence>
<proteinExistence type="inferred from homology"/>